<reference key="1">
    <citation type="journal article" date="2006" name="Nature">
        <title>Insights from the genome of the biotrophic fungal plant pathogen Ustilago maydis.</title>
        <authorList>
            <person name="Kaemper J."/>
            <person name="Kahmann R."/>
            <person name="Boelker M."/>
            <person name="Ma L.-J."/>
            <person name="Brefort T."/>
            <person name="Saville B.J."/>
            <person name="Banuett F."/>
            <person name="Kronstad J.W."/>
            <person name="Gold S.E."/>
            <person name="Mueller O."/>
            <person name="Perlin M.H."/>
            <person name="Woesten H.A.B."/>
            <person name="de Vries R."/>
            <person name="Ruiz-Herrera J."/>
            <person name="Reynaga-Pena C.G."/>
            <person name="Snetselaar K."/>
            <person name="McCann M."/>
            <person name="Perez-Martin J."/>
            <person name="Feldbruegge M."/>
            <person name="Basse C.W."/>
            <person name="Steinberg G."/>
            <person name="Ibeas J.I."/>
            <person name="Holloman W."/>
            <person name="Guzman P."/>
            <person name="Farman M.L."/>
            <person name="Stajich J.E."/>
            <person name="Sentandreu R."/>
            <person name="Gonzalez-Prieto J.M."/>
            <person name="Kennell J.C."/>
            <person name="Molina L."/>
            <person name="Schirawski J."/>
            <person name="Mendoza-Mendoza A."/>
            <person name="Greilinger D."/>
            <person name="Muench K."/>
            <person name="Roessel N."/>
            <person name="Scherer M."/>
            <person name="Vranes M."/>
            <person name="Ladendorf O."/>
            <person name="Vincon V."/>
            <person name="Fuchs U."/>
            <person name="Sandrock B."/>
            <person name="Meng S."/>
            <person name="Ho E.C.H."/>
            <person name="Cahill M.J."/>
            <person name="Boyce K.J."/>
            <person name="Klose J."/>
            <person name="Klosterman S.J."/>
            <person name="Deelstra H.J."/>
            <person name="Ortiz-Castellanos L."/>
            <person name="Li W."/>
            <person name="Sanchez-Alonso P."/>
            <person name="Schreier P.H."/>
            <person name="Haeuser-Hahn I."/>
            <person name="Vaupel M."/>
            <person name="Koopmann E."/>
            <person name="Friedrich G."/>
            <person name="Voss H."/>
            <person name="Schlueter T."/>
            <person name="Margolis J."/>
            <person name="Platt D."/>
            <person name="Swimmer C."/>
            <person name="Gnirke A."/>
            <person name="Chen F."/>
            <person name="Vysotskaia V."/>
            <person name="Mannhaupt G."/>
            <person name="Gueldener U."/>
            <person name="Muensterkoetter M."/>
            <person name="Haase D."/>
            <person name="Oesterheld M."/>
            <person name="Mewes H.-W."/>
            <person name="Mauceli E.W."/>
            <person name="DeCaprio D."/>
            <person name="Wade C.M."/>
            <person name="Butler J."/>
            <person name="Young S.K."/>
            <person name="Jaffe D.B."/>
            <person name="Calvo S.E."/>
            <person name="Nusbaum C."/>
            <person name="Galagan J.E."/>
            <person name="Birren B.W."/>
        </authorList>
    </citation>
    <scope>NUCLEOTIDE SEQUENCE [LARGE SCALE GENOMIC DNA]</scope>
    <source>
        <strain>DSM 14603 / FGSC 9021 / UM521</strain>
    </source>
</reference>
<reference key="2">
    <citation type="submission" date="2014-09" db="EMBL/GenBank/DDBJ databases">
        <authorList>
            <person name="Gueldener U."/>
            <person name="Muensterkoetter M."/>
            <person name="Walter M.C."/>
            <person name="Mannhaupt G."/>
            <person name="Kahmann R."/>
        </authorList>
    </citation>
    <scope>GENOME REANNOTATION</scope>
    <source>
        <strain>DSM 14603 / FGSC 9021 / UM521</strain>
    </source>
</reference>
<reference key="3">
    <citation type="journal article" date="2005" name="Appl. Environ. Microbiol.">
        <title>Genetic analysis of biosurfactant production in Ustilago maydis.</title>
        <authorList>
            <person name="Hewald S."/>
            <person name="Josephs K."/>
            <person name="Boelker M."/>
        </authorList>
    </citation>
    <scope>FUNCTION</scope>
</reference>
<reference key="4">
    <citation type="journal article" date="2007" name="Mol. Microbiol.">
        <title>A biosynthetic gene cluster for a secreted cellobiose lipid with antifungal activity from Ustilago maydis.</title>
        <authorList>
            <person name="Teichmann B."/>
            <person name="Linne U."/>
            <person name="Hewald S."/>
            <person name="Marahiel M.A."/>
            <person name="Boelker M."/>
        </authorList>
    </citation>
    <scope>FUNCTION</scope>
    <scope>INDUCTION</scope>
    <scope>PATHWAY</scope>
</reference>
<reference key="5">
    <citation type="journal article" date="2010" name="Appl. Environ. Microbiol.">
        <title>Activation of the ustilagic acid biosynthesis gene cluster in Ustilago maydis by the C2H2 zinc finger transcription factor Rua1.</title>
        <authorList>
            <person name="Teichmann B."/>
            <person name="Liu L."/>
            <person name="Schink K.O."/>
            <person name="Boelker M."/>
        </authorList>
    </citation>
    <scope>INDUCTION</scope>
</reference>
<sequence length="578" mass="64072">MATEHILLVCWPAVGHARPMLDYAAAQLKQNPGLIITFICSKMQIALLEGLAISEHLADKKFGDRLRLLGTGRPAQEVLKEFGDREDAKNAANSASKAPNTTANGPEPEVILTMQAATLIQKRFAEIFPTILANDDLFDEQDNSLLLPACVAGKPTTIVVNWMLPGMVETVRKHSSDLKMVTFFDNSCTFVTRMLGPRSIGGFGGIERLWSQYCNSNPEVDPNDSTLKEKLLGRRWTGKFYIPGSRMGAIEEQEMAALAKDWLLSVPLTPSLIEIQKLVDASHTILINTHLAVEERELDYLRMVYPFKKIGILGPAMFSGFVEKGEKLAAKLLDKHINVKPAASRPLTPPETPPPGSPDTDSHGEEEDPKQKSVKQVEKFLAESATGSVVYISFGTMFRPQPTHLIKMLEIIIYEMSLSSQFRLLFTFGGSKDLASSCPPSFAPQISALESQLFKSGNTLFVNWVDQHYVLQHPSVGWFLSHGGWNSCQESMLAGTPLLILPFFGDQLFNAYFLESIQIAYRFNTAANMSVADFVASFREGITCTRPESERGSQLTKNAKELQLRLKGERALAEVRLF</sequence>
<accession>A0A0D1CFF0</accession>
<feature type="chain" id="PRO_0000452763" description="Glycosyltransferase ugt1">
    <location>
        <begin position="1"/>
        <end position="578"/>
    </location>
</feature>
<feature type="region of interest" description="Disordered" evidence="1">
    <location>
        <begin position="81"/>
        <end position="106"/>
    </location>
</feature>
<feature type="region of interest" description="Disordered" evidence="1">
    <location>
        <begin position="342"/>
        <end position="375"/>
    </location>
</feature>
<feature type="compositionally biased region" description="Low complexity" evidence="1">
    <location>
        <begin position="90"/>
        <end position="104"/>
    </location>
</feature>
<feature type="compositionally biased region" description="Pro residues" evidence="1">
    <location>
        <begin position="347"/>
        <end position="357"/>
    </location>
</feature>
<gene>
    <name evidence="5" type="primary">ugt1</name>
    <name type="ORF">UMAG_06467</name>
</gene>
<name>UGT1_MYCMD</name>
<dbReference type="EC" id="2.4.1.-" evidence="7"/>
<dbReference type="EMBL" id="CM003162">
    <property type="protein sequence ID" value="KIS65763.1"/>
    <property type="molecule type" value="Genomic_DNA"/>
</dbReference>
<dbReference type="RefSeq" id="XP_011392734.1">
    <property type="nucleotide sequence ID" value="XM_011394432.1"/>
</dbReference>
<dbReference type="SMR" id="A0A0D1CFF0"/>
<dbReference type="EnsemblFungi" id="KIS65763">
    <property type="protein sequence ID" value="KIS65763"/>
    <property type="gene ID" value="UMAG_06467"/>
</dbReference>
<dbReference type="GeneID" id="23566048"/>
<dbReference type="KEGG" id="uma:UMAG_06467"/>
<dbReference type="VEuPathDB" id="FungiDB:UMAG_06467"/>
<dbReference type="eggNOG" id="KOG1192">
    <property type="taxonomic scope" value="Eukaryota"/>
</dbReference>
<dbReference type="InParanoid" id="A0A0D1CFF0"/>
<dbReference type="OrthoDB" id="5835829at2759"/>
<dbReference type="Proteomes" id="UP000000561">
    <property type="component" value="Chromosome 23"/>
</dbReference>
<dbReference type="GO" id="GO:0008194">
    <property type="term" value="F:UDP-glycosyltransferase activity"/>
    <property type="evidence" value="ECO:0000318"/>
    <property type="project" value="GO_Central"/>
</dbReference>
<dbReference type="CDD" id="cd03784">
    <property type="entry name" value="GT1_Gtf-like"/>
    <property type="match status" value="1"/>
</dbReference>
<dbReference type="Gene3D" id="3.40.50.2000">
    <property type="entry name" value="Glycogen Phosphorylase B"/>
    <property type="match status" value="2"/>
</dbReference>
<dbReference type="InterPro" id="IPR002213">
    <property type="entry name" value="UDP_glucos_trans"/>
</dbReference>
<dbReference type="PANTHER" id="PTHR48047">
    <property type="entry name" value="GLYCOSYLTRANSFERASE"/>
    <property type="match status" value="1"/>
</dbReference>
<dbReference type="PANTHER" id="PTHR48047:SF215">
    <property type="entry name" value="GLYCOSYLTRANSFERASE"/>
    <property type="match status" value="1"/>
</dbReference>
<dbReference type="Pfam" id="PF00201">
    <property type="entry name" value="UDPGT"/>
    <property type="match status" value="1"/>
</dbReference>
<dbReference type="SUPFAM" id="SSF53756">
    <property type="entry name" value="UDP-Glycosyltransferase/glycogen phosphorylase"/>
    <property type="match status" value="1"/>
</dbReference>
<protein>
    <recommendedName>
        <fullName evidence="5">Glycosyltransferase ugt1</fullName>
        <ecNumber evidence="7">2.4.1.-</ecNumber>
    </recommendedName>
    <alternativeName>
        <fullName evidence="5">Ustilagic acid biosynthesis cluster protein ugt1</fullName>
    </alternativeName>
</protein>
<organism>
    <name type="scientific">Mycosarcoma maydis</name>
    <name type="common">Corn smut fungus</name>
    <name type="synonym">Ustilago maydis</name>
    <dbReference type="NCBI Taxonomy" id="5270"/>
    <lineage>
        <taxon>Eukaryota</taxon>
        <taxon>Fungi</taxon>
        <taxon>Dikarya</taxon>
        <taxon>Basidiomycota</taxon>
        <taxon>Ustilaginomycotina</taxon>
        <taxon>Ustilaginomycetes</taxon>
        <taxon>Ustilaginales</taxon>
        <taxon>Ustilaginaceae</taxon>
        <taxon>Mycosarcoma</taxon>
    </lineage>
</organism>
<keyword id="KW-0328">Glycosyltransferase</keyword>
<keyword id="KW-1185">Reference proteome</keyword>
<keyword id="KW-0808">Transferase</keyword>
<evidence type="ECO:0000256" key="1">
    <source>
        <dbReference type="SAM" id="MobiDB-lite"/>
    </source>
</evidence>
<evidence type="ECO:0000269" key="2">
    <source>
    </source>
</evidence>
<evidence type="ECO:0000269" key="3">
    <source>
    </source>
</evidence>
<evidence type="ECO:0000269" key="4">
    <source>
    </source>
</evidence>
<evidence type="ECO:0000303" key="5">
    <source>
    </source>
</evidence>
<evidence type="ECO:0000305" key="6"/>
<evidence type="ECO:0000305" key="7">
    <source>
    </source>
</evidence>
<proteinExistence type="evidence at transcript level"/>
<comment type="function">
    <text evidence="2 3 7">Glycosyltransferase; part of the gene cluster that mediates the biosynthesis of the glycolipid biosurfactant ustilagic acid (UA) (PubMed:15932999, PubMed:17850255). UA is a secreted cellobiose glycolipid that is toxic for many microorganisms and confers biocontrol activity to U.maydis (PubMed:15932999, PubMed:17850255). UA consists of 15,16-dihydroxypalmitic or 2,15,16-trihydroxypalmitic acid, which is O-glycosidically linked to cellobiose at its terminal hydroxyl group (PubMed:17850255). In addition, the cellobiose moiety is acetylated and acylated with a short-chain hydroxy fatty acid (PubMed:17850255). UA biosynthesis starts with omega-hydroxylation of palmitic acid catalyzed by the cytochrome P450 monooxygenase cyp1 (PubMed:17850255). Terminal hydroxylation of palmitic acid precedes subterminal hydroxylation catalyzed by the cytochrome P450 monooxygenase cyp2 (PubMed:17850255). Sequential glucosylation of the hydroxy fatty acid is probably catalyzed by the glycosyltransferase ugt1 (Probable). The cellobiose lipid is further decorated by acetylation of the proximal glucose residue and by acylation with a short-chain beta-hydroxy fatty acid at the distal glucose residue (Probable). The acyltransferase uat1 may be a good candidate for catalyzing either acetylation or acylation of the cellobiose lipid (Probable). The fatty acid synthase fas2 may be involved in synthesis of the carbon backbone of the short-chain beta-hydroxy fatty acid esterified to the cellobiose disaccharide (Probable). The secreted UA consists of a mixture of both alpha-hydroxylated and non-hydroxylated glycolipids; therefore, alpha-hydroxylation of the long-chain fatty, catalyzed by the fatty acid hydroxylase ahd1, occurs late in UA biosynthesis and may be the last step before secretion (PubMed:17850255).</text>
</comment>
<comment type="pathway">
    <text evidence="7">Secondary metabolite biosynthesis.</text>
</comment>
<comment type="induction">
    <text evidence="3 4">Expression is strongly induced under conditions of nitrogen starvation (PubMed:17850255). Expression is positively regulated by the cluster-specific transcription factor rua1 that recognizes and binds to the specific 5'-T/G-G/T-C-G-C-A-T-A/T-C/T-C/T-G/A-3' upstream activating sequence found in all promoters of the UA biosynthesis genes (PubMed:20173069).</text>
</comment>
<comment type="similarity">
    <text evidence="6">Belongs to the UDP-glycosyltransferase family.</text>
</comment>